<protein>
    <recommendedName>
        <fullName evidence="1">SsrA-binding protein</fullName>
    </recommendedName>
    <alternativeName>
        <fullName evidence="1">Small protein B</fullName>
    </alternativeName>
</protein>
<accession>Q2IWV3</accession>
<sequence>MAEKNERAIKVVAENRKARFNYAIEDTVEAGISLTGTEVKSVRGGKATIAESYADSRGGEIWLINATIPEYLQANRFNHEPKRPRKLLLHRKQINKLMGAIERQGMTLVPLKLYFNEKGRAKLLLALAKGKQLHDKRETEKKRDWSREKGRLLRARG</sequence>
<reference key="1">
    <citation type="submission" date="2006-01" db="EMBL/GenBank/DDBJ databases">
        <title>Complete sequence of Rhodopseudomonas palustris HaA2.</title>
        <authorList>
            <consortium name="US DOE Joint Genome Institute"/>
            <person name="Copeland A."/>
            <person name="Lucas S."/>
            <person name="Lapidus A."/>
            <person name="Barry K."/>
            <person name="Detter J.C."/>
            <person name="Glavina T."/>
            <person name="Hammon N."/>
            <person name="Israni S."/>
            <person name="Pitluck S."/>
            <person name="Chain P."/>
            <person name="Malfatti S."/>
            <person name="Shin M."/>
            <person name="Vergez L."/>
            <person name="Schmutz J."/>
            <person name="Larimer F."/>
            <person name="Land M."/>
            <person name="Hauser L."/>
            <person name="Pelletier D.A."/>
            <person name="Kyrpides N."/>
            <person name="Anderson I."/>
            <person name="Oda Y."/>
            <person name="Harwood C.S."/>
            <person name="Richardson P."/>
        </authorList>
    </citation>
    <scope>NUCLEOTIDE SEQUENCE [LARGE SCALE GENOMIC DNA]</scope>
    <source>
        <strain>HaA2</strain>
    </source>
</reference>
<proteinExistence type="inferred from homology"/>
<evidence type="ECO:0000255" key="1">
    <source>
        <dbReference type="HAMAP-Rule" id="MF_00023"/>
    </source>
</evidence>
<evidence type="ECO:0000256" key="2">
    <source>
        <dbReference type="SAM" id="MobiDB-lite"/>
    </source>
</evidence>
<dbReference type="EMBL" id="CP000250">
    <property type="protein sequence ID" value="ABD07307.1"/>
    <property type="molecule type" value="Genomic_DNA"/>
</dbReference>
<dbReference type="RefSeq" id="WP_011441492.1">
    <property type="nucleotide sequence ID" value="NC_007778.1"/>
</dbReference>
<dbReference type="SMR" id="Q2IWV3"/>
<dbReference type="STRING" id="316058.RPB_2604"/>
<dbReference type="KEGG" id="rpb:RPB_2604"/>
<dbReference type="eggNOG" id="COG0691">
    <property type="taxonomic scope" value="Bacteria"/>
</dbReference>
<dbReference type="HOGENOM" id="CLU_108953_0_1_5"/>
<dbReference type="OrthoDB" id="9805462at2"/>
<dbReference type="Proteomes" id="UP000008809">
    <property type="component" value="Chromosome"/>
</dbReference>
<dbReference type="GO" id="GO:0005829">
    <property type="term" value="C:cytosol"/>
    <property type="evidence" value="ECO:0007669"/>
    <property type="project" value="TreeGrafter"/>
</dbReference>
<dbReference type="GO" id="GO:0003723">
    <property type="term" value="F:RNA binding"/>
    <property type="evidence" value="ECO:0007669"/>
    <property type="project" value="UniProtKB-UniRule"/>
</dbReference>
<dbReference type="GO" id="GO:0070929">
    <property type="term" value="P:trans-translation"/>
    <property type="evidence" value="ECO:0007669"/>
    <property type="project" value="UniProtKB-UniRule"/>
</dbReference>
<dbReference type="CDD" id="cd09294">
    <property type="entry name" value="SmpB"/>
    <property type="match status" value="1"/>
</dbReference>
<dbReference type="Gene3D" id="2.40.280.10">
    <property type="match status" value="1"/>
</dbReference>
<dbReference type="HAMAP" id="MF_00023">
    <property type="entry name" value="SmpB"/>
    <property type="match status" value="1"/>
</dbReference>
<dbReference type="InterPro" id="IPR023620">
    <property type="entry name" value="SmpB"/>
</dbReference>
<dbReference type="InterPro" id="IPR000037">
    <property type="entry name" value="SsrA-bd_prot"/>
</dbReference>
<dbReference type="InterPro" id="IPR020081">
    <property type="entry name" value="SsrA-bd_prot_CS"/>
</dbReference>
<dbReference type="NCBIfam" id="NF003843">
    <property type="entry name" value="PRK05422.1"/>
    <property type="match status" value="1"/>
</dbReference>
<dbReference type="NCBIfam" id="TIGR00086">
    <property type="entry name" value="smpB"/>
    <property type="match status" value="1"/>
</dbReference>
<dbReference type="PANTHER" id="PTHR30308:SF2">
    <property type="entry name" value="SSRA-BINDING PROTEIN"/>
    <property type="match status" value="1"/>
</dbReference>
<dbReference type="PANTHER" id="PTHR30308">
    <property type="entry name" value="TMRNA-BINDING COMPONENT OF TRANS-TRANSLATION TAGGING COMPLEX"/>
    <property type="match status" value="1"/>
</dbReference>
<dbReference type="Pfam" id="PF01668">
    <property type="entry name" value="SmpB"/>
    <property type="match status" value="1"/>
</dbReference>
<dbReference type="SUPFAM" id="SSF74982">
    <property type="entry name" value="Small protein B (SmpB)"/>
    <property type="match status" value="1"/>
</dbReference>
<dbReference type="PROSITE" id="PS01317">
    <property type="entry name" value="SSRP"/>
    <property type="match status" value="1"/>
</dbReference>
<gene>
    <name evidence="1" type="primary">smpB</name>
    <name type="ordered locus">RPB_2604</name>
</gene>
<keyword id="KW-0963">Cytoplasm</keyword>
<keyword id="KW-1185">Reference proteome</keyword>
<keyword id="KW-0694">RNA-binding</keyword>
<organism>
    <name type="scientific">Rhodopseudomonas palustris (strain HaA2)</name>
    <dbReference type="NCBI Taxonomy" id="316058"/>
    <lineage>
        <taxon>Bacteria</taxon>
        <taxon>Pseudomonadati</taxon>
        <taxon>Pseudomonadota</taxon>
        <taxon>Alphaproteobacteria</taxon>
        <taxon>Hyphomicrobiales</taxon>
        <taxon>Nitrobacteraceae</taxon>
        <taxon>Rhodopseudomonas</taxon>
    </lineage>
</organism>
<feature type="chain" id="PRO_1000002125" description="SsrA-binding protein">
    <location>
        <begin position="1"/>
        <end position="157"/>
    </location>
</feature>
<feature type="region of interest" description="Disordered" evidence="2">
    <location>
        <begin position="136"/>
        <end position="157"/>
    </location>
</feature>
<feature type="compositionally biased region" description="Basic and acidic residues" evidence="2">
    <location>
        <begin position="136"/>
        <end position="151"/>
    </location>
</feature>
<comment type="function">
    <text evidence="1">Required for rescue of stalled ribosomes mediated by trans-translation. Binds to transfer-messenger RNA (tmRNA), required for stable association of tmRNA with ribosomes. tmRNA and SmpB together mimic tRNA shape, replacing the anticodon stem-loop with SmpB. tmRNA is encoded by the ssrA gene; the 2 termini fold to resemble tRNA(Ala) and it encodes a 'tag peptide', a short internal open reading frame. During trans-translation Ala-aminoacylated tmRNA acts like a tRNA, entering the A-site of stalled ribosomes, displacing the stalled mRNA. The ribosome then switches to translate the ORF on the tmRNA; the nascent peptide is terminated with the 'tag peptide' encoded by the tmRNA and targeted for degradation. The ribosome is freed to recommence translation, which seems to be the essential function of trans-translation.</text>
</comment>
<comment type="subcellular location">
    <subcellularLocation>
        <location evidence="1">Cytoplasm</location>
    </subcellularLocation>
    <text evidence="1">The tmRNA-SmpB complex associates with stalled 70S ribosomes.</text>
</comment>
<comment type="similarity">
    <text evidence="1">Belongs to the SmpB family.</text>
</comment>
<name>SSRP_RHOP2</name>